<dbReference type="EMBL" id="AL157769">
    <property type="status" value="NOT_ANNOTATED_CDS"/>
    <property type="molecule type" value="Genomic_DNA"/>
</dbReference>
<dbReference type="EMBL" id="AK097495">
    <property type="protein sequence ID" value="BAC05076.1"/>
    <property type="molecule type" value="mRNA"/>
</dbReference>
<dbReference type="EMBL" id="AK125984">
    <property type="status" value="NOT_ANNOTATED_CDS"/>
    <property type="molecule type" value="mRNA"/>
</dbReference>
<dbReference type="EMBL" id="AL833908">
    <property type="protein sequence ID" value="CAD38764.1"/>
    <property type="molecule type" value="mRNA"/>
</dbReference>
<dbReference type="CCDS" id="CCDS73596.1"/>
<dbReference type="RefSeq" id="NP_001139669.1">
    <property type="nucleotide sequence ID" value="NM_001146197.3"/>
</dbReference>
<dbReference type="IntAct" id="Q8NDH2">
    <property type="interactions" value="7"/>
</dbReference>
<dbReference type="MINT" id="Q8NDH2"/>
<dbReference type="STRING" id="9606.ENSP00000320232"/>
<dbReference type="GlyGen" id="Q8NDH2">
    <property type="glycosylation" value="1 site, 1 O-linked glycan (1 site)"/>
</dbReference>
<dbReference type="iPTMnet" id="Q8NDH2"/>
<dbReference type="PhosphoSitePlus" id="Q8NDH2"/>
<dbReference type="BioMuta" id="CCDC168"/>
<dbReference type="DMDM" id="193806663"/>
<dbReference type="jPOST" id="Q8NDH2"/>
<dbReference type="MassIVE" id="Q8NDH2"/>
<dbReference type="PaxDb" id="9606-ENSP00000320232"/>
<dbReference type="PeptideAtlas" id="Q8NDH2"/>
<dbReference type="ProteomicsDB" id="73026"/>
<dbReference type="Antibodypedia" id="62446">
    <property type="antibodies" value="11 antibodies from 5 providers"/>
</dbReference>
<dbReference type="Ensembl" id="ENST00000322527.4">
    <property type="protein sequence ID" value="ENSP00000320232.3"/>
    <property type="gene ID" value="ENSG00000175820.4"/>
</dbReference>
<dbReference type="GeneID" id="643677"/>
<dbReference type="KEGG" id="hsa:643677"/>
<dbReference type="MANE-Select" id="ENST00000322527.4">
    <property type="protein sequence ID" value="ENSP00000320232.3"/>
    <property type="RefSeq nucleotide sequence ID" value="NM_001146197.3"/>
    <property type="RefSeq protein sequence ID" value="NP_001139669.1"/>
</dbReference>
<dbReference type="UCSC" id="uc001vpm.4">
    <property type="organism name" value="human"/>
</dbReference>
<dbReference type="AGR" id="HGNC:26851"/>
<dbReference type="CTD" id="643677"/>
<dbReference type="DisGeNET" id="643677"/>
<dbReference type="GeneCards" id="CCDC168"/>
<dbReference type="HGNC" id="HGNC:26851">
    <property type="gene designation" value="CCDC168"/>
</dbReference>
<dbReference type="HPA" id="ENSG00000175820">
    <property type="expression patterns" value="Tissue enriched (testis)"/>
</dbReference>
<dbReference type="MalaCards" id="CCDC168"/>
<dbReference type="neXtProt" id="NX_Q8NDH2"/>
<dbReference type="OpenTargets" id="ENSG00000175820"/>
<dbReference type="VEuPathDB" id="HostDB:ENSG00000175820"/>
<dbReference type="eggNOG" id="ENOG502ST12">
    <property type="taxonomic scope" value="Eukaryota"/>
</dbReference>
<dbReference type="GeneTree" id="ENSGT00940000163791"/>
<dbReference type="HOGENOM" id="CLU_222861_0_0_1"/>
<dbReference type="InParanoid" id="Q8NDH2"/>
<dbReference type="OMA" id="DYMQQKE"/>
<dbReference type="OrthoDB" id="9837682at2759"/>
<dbReference type="PAN-GO" id="Q8NDH2">
    <property type="GO annotations" value="0 GO annotations based on evolutionary models"/>
</dbReference>
<dbReference type="PhylomeDB" id="Q8NDH2"/>
<dbReference type="TreeFam" id="TF337758"/>
<dbReference type="PathwayCommons" id="Q8NDH2"/>
<dbReference type="SignaLink" id="Q8NDH2"/>
<dbReference type="ChiTaRS" id="CCDC168">
    <property type="organism name" value="human"/>
</dbReference>
<dbReference type="Pharos" id="Q8NDH2">
    <property type="development level" value="Tdark"/>
</dbReference>
<dbReference type="PRO" id="PR:Q8NDH2"/>
<dbReference type="Proteomes" id="UP000005640">
    <property type="component" value="Chromosome 13"/>
</dbReference>
<dbReference type="RNAct" id="Q8NDH2">
    <property type="molecule type" value="protein"/>
</dbReference>
<dbReference type="Bgee" id="ENSG00000175820">
    <property type="expression patterns" value="Expressed in sperm and 11 other cell types or tissues"/>
</dbReference>
<dbReference type="GO" id="GO:0016020">
    <property type="term" value="C:membrane"/>
    <property type="evidence" value="ECO:0007669"/>
    <property type="project" value="UniProtKB-SubCell"/>
</dbReference>
<dbReference type="InterPro" id="IPR031624">
    <property type="entry name" value="CCDC168_N"/>
</dbReference>
<dbReference type="InterPro" id="IPR053366">
    <property type="entry name" value="LRR_transmembrane"/>
</dbReference>
<dbReference type="PANTHER" id="PTHR35542">
    <property type="entry name" value="COILED-COIL DOMAIN-CONTAINING PROTEIN 168"/>
    <property type="match status" value="1"/>
</dbReference>
<dbReference type="PANTHER" id="PTHR35542:SF2">
    <property type="entry name" value="LEUCINE-RICH REPEAT TRANSMEMBRANE PROTEIN CCDC168"/>
    <property type="match status" value="1"/>
</dbReference>
<dbReference type="Pfam" id="PF15804">
    <property type="entry name" value="CCDC168_N"/>
    <property type="match status" value="19"/>
</dbReference>
<evidence type="ECO:0000255" key="1"/>
<evidence type="ECO:0000256" key="2">
    <source>
        <dbReference type="SAM" id="MobiDB-lite"/>
    </source>
</evidence>
<evidence type="ECO:0000269" key="3">
    <source>
    </source>
</evidence>
<evidence type="ECO:0000305" key="4"/>
<evidence type="ECO:0000312" key="5">
    <source>
        <dbReference type="HGNC" id="HGNC:26851"/>
    </source>
</evidence>
<protein>
    <recommendedName>
        <fullName evidence="4">Leucine-rich repeat transmembrane protein CCDC168</fullName>
    </recommendedName>
    <alternativeName>
        <fullName evidence="5">Coiled-coil domain-containing protein 168</fullName>
    </alternativeName>
</protein>
<keyword id="KW-0433">Leucine-rich repeat</keyword>
<keyword id="KW-0472">Membrane</keyword>
<keyword id="KW-1267">Proteomics identification</keyword>
<keyword id="KW-1185">Reference proteome</keyword>
<keyword id="KW-0677">Repeat</keyword>
<keyword id="KW-0812">Transmembrane</keyword>
<keyword id="KW-1133">Transmembrane helix</keyword>
<sequence>MSKQYYSFKKGVGSGLEDNTFMTLWDFLESWIIQNDWVAIFFIILLGIIFEIILMKACASFWKKPTLPEKGSSDVQETEDSCPKSRKLAPENWSVINSSSGERVGTFLEKRITSSLTSEEKECNFEDRILFSREILWSGTSESEDQVSPSSESHVPSSNGISSSLPLFYSEVEETCLSHTEHPDREYETIQFSSKKLFSMMKTNKNKNSGFSSDLSFSASRFTVENEDLDVAPCPLAHLFLSRDQVRLLEENVRNQIPSKPKTKLGSRTTYQCSRSQESLNQNQPSVGMVISVQAQDSFPGQNAFQNQGLYEVQFTSQAQYINHNQESIKSQPESKASNFAQPEDVMKKPFSSSTQDSFQSQDLDRNQHFVEVPSIVEAKYSVKGLESDEHLGEDQHCVWFIDSNKVKYSIKGQDTIFKNAEFLVLTLNPNLVTEDMPQLRSVKAQGQQQIVSSELNQDSVYSSVPLLSTIKGQKNRRKTPDSKSKLSLNVPSLKAKKTPTSQVFQITVCHTLKNRNELGCKNNTEKKELHERKDISDIALHLISVSKLILPYVKNYSRKQLVKVMPGLIKCGHFLQKQNKSPDTEKINYAGPLEETGISDITKKEKEYDKENKRLKNISPKMLPQLEQSFMVNTVQLKAPCLLVETNGKSKESLKDSITQAKGIGITEFHVLNSKKPFDLHIPKHKTSLEEAISKPMQKLVSSPEMESNNRMKIQEDLQSSENSHLQLSNGEELPTSTPKTQRCFPRENTQKQKDFLELVLELSNVGLLISPGSKMHKSSEELEAIKIQVNTESVNLKESKPLILNVTEDSDLRESEELECNTGSNITNMHQDKETSDAFHSATYTTISQLPDTETHSISKAKADTLRIIRLSHSASKQEKLPDEKETQNAEYIDKSCTFKKPQQCDRKEQEKEANSELTQGFRFSIHLKQKPKYVKFQMEQISSGSSKAPNKEQEVQPQTLSTQTILENSPCPMMDPFQVEKVKQSTDRPTDRESAGDPKNPLTMPENLPVGELLIETTEYSVPFGGNLQKTTDSHIAEEKEDVKRYLPAVALGSFNNHLLTLPYFKRQEIKKKLSETKSVLSVKYVIMKVKKPAISLMPYINICGTSNHRKKMGGNFEIIIKQILQDKIAAGMLLNVIYPPMSILPNTRMYSRLNAENHSHIKLVQEESQIEREEKYPYFINEGNESQNTLDAKLQDEVKGVKETLPKAVLHDSCNLGLDAHLEKEIKTEKEMHQPIPFTETIIESVVSPIMELSHAENVKSTQKTQTDCKCTADSETPSPISGKSLIGDPLNQTRESYIPSNGSDTREMGYCFAEEKTEIPKDLPATSPETFNYCTPVLSCSKVMKKRVTFALTTSTAKPKCVNTKAVKPSISETVSVTSHRKKSELDFKTKFKKINQTKGLVPECLNTLCSPMHSRLQREFCLPASQLKQGETADKTYTDVFAKNSISHDREEKLQDGKEEEHKVLLEAAPQLSQHLGSEAGQMKEIHLESDPVLNCLTLELHINGQRLQHQTGFEQTTLETSLQMGPLEAEELQKANETENDIKVLGGPKIPPPKALQALENSDGLILNAYQKDNELVKSDEELNQPGSTNIQVQPQTHFTQTILKSTSCPTLDQFPFEKVESHVRFSPLKSGEAKVDEIIFYAREGGISSDSSHQKEQAGGTEKKETAIFGSCMPALSTPKTTRNLKQFSDMKTLVNPKCGIIKAKKPSISYMLNIRAGAGPKRRKELSCNLTTKMKELHQGKKGVDETYAFLTMTPDINKYSKVETEKDTLREKRLSSTQVKQDTSPHEDSITSRDIKETLLQDEEQEERKQEALLKVIPQHLQHFMFRSGQGKDLDFHKLENQGSRKILFVTKQDVPQQLQPAEPIQREETKKCLQTQNGTICTVNSKLLPLKSEDSVNGEVLTGAIKRGVPTDRKCMGEQHNSGKGEKAEFNKDLQATVLELQKSPHGGEAQKANLTDMESGSSNAMNMNVQHEREDKNIQKMLTESVPCYSQHLRFSTHQMKDPDPCKSGSEPKSPEGRSWNLSHIVQKTKQETHFRETVLEPISGYMMKQSPHMQEGIKCMEGLKTSFPKTGKSKIGSIPRDTPWDENPRRKWDSSISEKTAWNQKNLQTVLKPLDFSSLMSSEYESRSYTLEFIGKKSMSPKCVTLKAKQLRILQLFNIIRYSTENHRKKKQHRFKYKMKGKQWYTSIGEALLSATEYAKSTTSKSMIDKLLYNTAARCILSNRTRRQNLDGHITEEKEEVQENVAAIFLGLLDFFMPVLSDSKNQRNTAQLSEKEIIFNAKCLTMKEKKSSISQIHKINRESTRKHRKKCKSYLKTVSNRKCQENHGHITEEEEEVQENSPATFLGPLDFFMPVLSDSKNQINTIQLSERKIILNPKCLTMKEKKPPISQIHKISGQFTTKHRKKLESNLKTKLKAMWQGENVADTFPNTTSFTPDSSDIKRQSGFQTEIDMRISGLSHTQPTQIESLAEGIARYSDPIDKRRTSNLVKGAKLHDRESGEEKQEHLTEMDPFYAENFMANTYLRKDRHLGKSEDVLLGETFFSKSQIYKGNSEKNVKIEKNKNGKESLKVGLARMEKSDNCAELSEATDDAISNKYDKQNIGHSVLKENAFCNLAAIVPDSVGRHSPASEEMKRQNGRLKMADRSSPQGRPLQAKQSAVSQSPDTAGYAVVSNNKEQKQNFKAQKTEAEVDLIDQEAKINVAEEFNPESVFFSKIHPLQIENKKEFKTADWKTRADPKTFALPKKQQELCVSGTIWSYPNPYTSISPKIIRHKDKAKTADVESTMHTKQIKLKAKRITVSQLLEYGTASNKKELRGNIQQQKSFQLSKNAVHRVLKAVYDSGYCVSSIKKLTEVKMEKDKPKDRTCILPQPKLEKPLKEMQRSLSGCTDMSSILRKQEQDIREKEQKHQSISEDISQYYIGPLRISSQQINYSSFDAPRIRTDEELEFLIAQRAKEKDVGIAKHSVSIPWEREGSKRLDIPLNSKGQNIFFTELDTSQQKTCQEQELLKQEDISMTNLGSMACPIMEPLHLENTGKVTEEEDVYINRKISSHVLGKEGLKETDIFVGSKGQKFLCTNSEVQHKVPAEQKEQVNPDHVPESILDSESFLSKDPLHLKQAVNTARKENVTISESFNENLWGKEQSKLDITLKSNRQKMDFSKKLRMKHLSNYYQNKENILESVLPCILHQLYIENPKKEGSAEEIMSSKVLSPMVEKASHEVGIPVDQPPCSEGIHLNIKGRKEHPQESTHEAFPASVSHSLMDVLQIKSPKVKKALKAINSLGYLTSNTKGIGLLFPRQAEKEEKYTYKALPKPASHSKTDLFQFNASMQQEKLDAMDIPHYDYLTSQTREAVKQMDVIVGYTQNSKKRQDLLKTGQKWQYLPISYENFWEHISCPQKYPCLLQHLMPQEKEALSEGGNLSSRTPGLDLFSADQLSTITKNRLEWIVPLISPRQMKKQDSMLPLGSYHKTIKYASLLFPKGMKSSDGVQVFDLISNNSSPKLRLGKKIETQKANEKVQKEVCLPITLHSLSASMPILQESKGQKDSVEQVIRKGVICHKRRTSKWKKSVFSHILNTSDCGASSNRLEMQWNMTDKMVNVKHRMSEIDLVAAKICESILSLPHFKLNKETIDGVISSNVKSTKQHISQGKNDRVKAMDMKRIKSPNIILKPRKSSLSHILSIKEFPLLLDIIKQEGKMQEGKGKSSMKLTNLCTSLPSLSHSNSNSRTKAGKDKSGTLKGCLPPLKLQASSNARRVSSAESINRDSLSNVIESKCFPQKKKEDRENIVDVKDVMGLKCITLKGKKSLFRHLLHGKEPQRSNKKLEKMTQEDESNLNVVQNKLCASILSPPHLEWNPRIKEVYMRGITRFCLSSSTQQELSDTMEKCEQPIDDSLSSIEKAKHMPQKDKDRVEKALEKIMHSKRIALEVKQPSIFQELELNIKEKGGKIQEDKEVEIWSKPFASISFLPYSKVGTIEGEEAMRIKMRSSFSQPNLQESSDTEKTAYEKCISDNISNSVKKALESILQKEQRQKMEKIRALKKMKSSISQGIQLDIKEQEKRIEHIKGEPSVLLTNACASIPSPSHLQLDTRREKAEYVTEITRYYLPELSHQKSSEAGEKADGVASKGDITIKVQKAKDYMQQKEDDEVKISAKKDIMHPEDKGLKAKKALSQDLPLNTKEPGKMDQEAQEQGKEDREGEEQGKEDRRGAGQEKVDREDKEQGKMDHEVEEQQKADGVGIEQGKMDGDKNEQERVLFLYLPSNSSLTHYILDTRIEGEEDQQGIIRPGILQPRHQKSSETGKKANGVPSEGDSASEVQKAKDYMQQKEEDEVKISAEKDLMHPEDKDLKGKKALSQNLPLNPKEPGKRDGEGQEQGKEDGEGEEQGNRDGETEEQQQADGVGTEQEKRDGHKSKQETVLFLHLPSESSLTCYELNTRKEGEEDLQGIIKSATLQLRQQKSFDAGKIAHTKSFGVDSSNDVKTVQEYKPQKEVDRGKTVSVDYIMQPEGTIFEAEQLSLPHTLNIPGSSGSKTREVLTNIKEKLRHVQERKSELDVFLTIPSLSHCKLDKRTAGKKEEQGVTRSFLPPSWHMESSDTGKLKYTLSYLNDITGDSNRTKYMAQIQKDKANISEKSVMHPEYIAVKAEKSPLSHILKTKELQVNISQQGEKAQEGEVEIVVLLSKTCPFVTSSAFLELDSIKEEEGEPRITRSFMPHLEIQESLPSRQTAPTKPTESLVKKEKQLLPQKEDRVQTVSMHGLMHPNGAVFKAKTSAPPQVFSITEHSPLSKRKEPQWGMKERAGQKQDRTGRPHVILTKTHPFMPSLSHHRFSPSQPKLPISSGAGKSRLANSNEGISSHKVILKANQQMPYKEAKDRVKIEGREGRILPKRIHLRAEALPLALLCNGKNYSLHIEEQGEGVQESKKEPGVVPRKSASFPPPPFYLNCDTRRNEKEGTLGKTQFSFPPLKIQDSSDSGKKAYTESLHGYTLSNSKGPVQPTAQGEEKGGLRIDMEDKMLPKCTDLKAKQLLLSDILNTKKLQWKSKEQKRKIQEDKNKQVKGLPSINTSLLTPPYLKFDTTEGQENVIRIAKVSLPQSRSKESSDAGRIACPEATHGELSSDVKQLKAHLLQKEEKDREKVADMTSVLDPNKMYLKAKKSPVLHTHSFSDLQWKTREQEEEKVQKVKSGPGVMLSKSPSRSSPLHLNVNTGFQEESIPILTRPSFPLVKLQVSPDTEGGTCIRPIAGDILIYLQKGKHVSQNKEEDDVQIVSILIFPKHQEEKVQECEGEPGVVLTKSTSLPSLSQLELDKETHLGNEMLRLKRPILRRISHIGETVHRESVVGDIPKDVKNEKQHIPQKEERNQKKIIDMRGTDITLKSKKSPRSCMLHRTELHVNIGGQGRKEHEGQDKPPGMIQRKMCILFSKPLPSNLKLERATHADEERLGGKTSFVLPLMPSALPDTEKTADAEARSGDVRKGKPHRSQKENRHEVKTIDMRFRIHCQEARISPMSHILNAKELVLNINKLEKKVHKDKDEACVVLSRTFLSIPSAPPLYLDSGNKTDKDTPGITGSSCPQRTLHVPSNTQKITNRDSVEGVDKNVVKQAEQYVPRPEAEQQLTSNFMISVQQRNQPSRVRSEEDLNQLVLNSRDEDIYFTGFGTIRSGKRPEWLFTGKKAQPVKYKTETLTAFLSYPTMDATKMGGLEEDTEIMDNLNHKISPKASVSLIRKISKELYVTLGTPANSKGFSVSERYAHQQETSSKVSPELAGSCKFDKPKEDGQSNDRISKMFSPKVLAPQTKGSLKKISIVTNWNAPQNIEEQDIVMKKQVIRRCEHGHKTRTNTILSKFPLQSGKQKTPSETDVDKKTTAHLSLQMLPGIHMDMTEIDPAKGGRKQALLISEQEEGVLEFLPKSLFPPWTFQFQSGDLEEKHQTDANTNINLEQKKLEMDNDSTVNQKEGKLKIGTNRALHLQEEKTEMHKARTANLEKERGRMDTSSSAHPHLLSLKAEESQMKTQVITHRENSRLIMQKQKKELEASNAKQSIQLQKLFQRNVLDSFYSYVPLSPKRKDQKGRLTIRDLKRELSTKYLTMKIQNHPIPQMLNITGRGTPSNRKKLEYDVKLKNIASWSKDVSGIFIRSLSISIMRSPHTDPKTNLEREKRICLPKFQEKSPNTSEMSKRDTLTIVKGEQNFTNTVPQDPQPFAVDKQQMQKLPNVKSEANLRSEMNKKYLKAQTKERIVPEHDVSRIIKKPDLRIIEQEEKILKRILTPTECPSMLEDPKLPKQRDQSEPVWDMTTQKVQQQKAFPGTVPIPPQVKSSEVKIVADSTNAEHLLPICEATKAISESQVKNMIQDKVSSDKLDNIQAYKPDDLKSPPFPEGPDTISTAIYPKTQHKSLLEQFTPKEKNKLTSHLESKALEIQLNLIPEMARKSLQMFNFYPKGTISKDNSWRFYSRHKTMNFMSLEGTDTIEPNSKHKHQKDSPLASNMKTLIVDVSSDSEETITKLQSINKLENGTSAVTSASEMLLPHTLQNHSVKEKGKLLMHFSVKTLEIQMKAFPRIVRESYAMTSAHERKKPLSNCIHPGFTGPKRQNRILLLSEEKSLHQIDLDLQYKYLRFLLGLPVGSTFPKPNVLPKHSKLNTIAVCKNVNAGGQSGSLSIDTELLEQHISFKKQSPHENSSLIRKFPQPTLVCASDRDLHSPRKKDTQVLSESEFHVTPEKNKQYHVWFQERNTCESVDLRTQRNATGSAVSCETQISEDFVDIQTDIESPADLDECSCLEVSESEECVFLEANSYLSQESENILFELQTGIPLENVYKITTDLKSFYSEDSGSHCTRECRKETLIITPPSCKSHKSRKYRSSSKMKSPDWLCHSSSNTAEIQSRSSSVSFSEEKISWTTKSRTSYSSAPLTESNIKSHLAKNQGKSHRHPESQERKKARSDLFRKNSSHWDHDYSCTHSKGKRDRKKRVYDYESERLDCFQSKHKSASKPHHDDINFYSERKQNRPFFFACVPADSLEVIPKTIRWTIPPETLRKRNFRIPLVAKISSSWNIWSSSKKLLGSLSGSLTTVFHS</sequence>
<feature type="chain" id="PRO_0000342529" description="Leucine-rich repeat transmembrane protein CCDC168">
    <location>
        <begin position="1"/>
        <end position="7081"/>
    </location>
</feature>
<feature type="transmembrane region" description="Helical" evidence="1">
    <location>
        <begin position="37"/>
        <end position="57"/>
    </location>
</feature>
<feature type="repeat" description="LRR 1" evidence="1">
    <location>
        <begin position="233"/>
        <end position="256"/>
    </location>
</feature>
<feature type="repeat" description="LRR 2" evidence="1">
    <location>
        <begin position="420"/>
        <end position="445"/>
    </location>
</feature>
<feature type="repeat" description="LRR 3" evidence="1">
    <location>
        <begin position="865"/>
        <end position="890"/>
    </location>
</feature>
<feature type="repeat" description="LRR 4" evidence="1">
    <location>
        <begin position="1050"/>
        <end position="1075"/>
    </location>
</feature>
<feature type="repeat" description="LRR 5" evidence="1">
    <location>
        <begin position="1501"/>
        <end position="1527"/>
    </location>
</feature>
<feature type="repeat" description="LRR 6" evidence="1">
    <location>
        <begin position="2373"/>
        <end position="2397"/>
    </location>
</feature>
<feature type="repeat" description="LRR 7" evidence="1">
    <location>
        <begin position="2727"/>
        <end position="2749"/>
    </location>
</feature>
<feature type="repeat" description="LRR 8" evidence="1">
    <location>
        <begin position="2832"/>
        <end position="2855"/>
    </location>
</feature>
<feature type="repeat" description="LRR 9" evidence="1">
    <location>
        <begin position="2862"/>
        <end position="2889"/>
    </location>
</feature>
<feature type="repeat" description="LRR 10" evidence="1">
    <location>
        <begin position="3433"/>
        <end position="3458"/>
    </location>
</feature>
<feature type="repeat" description="LRR 11" evidence="1">
    <location>
        <begin position="3630"/>
        <end position="3653"/>
    </location>
</feature>
<feature type="repeat" description="LRR 12" evidence="1">
    <location>
        <begin position="3875"/>
        <end position="3898"/>
    </location>
</feature>
<feature type="repeat" description="LRR 13" evidence="1">
    <location>
        <begin position="5311"/>
        <end position="5336"/>
    </location>
</feature>
<feature type="repeat" description="LRR 14" evidence="1">
    <location>
        <begin position="5522"/>
        <end position="5545"/>
    </location>
</feature>
<feature type="repeat" description="LRR 15" evidence="1">
    <location>
        <begin position="5901"/>
        <end position="5924"/>
    </location>
</feature>
<feature type="repeat" description="LRR 16" evidence="1">
    <location>
        <begin position="6259"/>
        <end position="6282"/>
    </location>
</feature>
<feature type="repeat" description="LRR 17" evidence="1">
    <location>
        <begin position="6419"/>
        <end position="6442"/>
    </location>
</feature>
<feature type="repeat" description="LRR 18" evidence="1">
    <location>
        <begin position="6552"/>
        <end position="6575"/>
    </location>
</feature>
<feature type="repeat" description="LRR 19" evidence="1">
    <location>
        <begin position="6613"/>
        <end position="6637"/>
    </location>
</feature>
<feature type="repeat" description="LRR 20" evidence="1">
    <location>
        <begin position="7012"/>
        <end position="7036"/>
    </location>
</feature>
<feature type="region of interest" description="Disordered" evidence="2">
    <location>
        <begin position="717"/>
        <end position="745"/>
    </location>
</feature>
<feature type="region of interest" description="Disordered" evidence="2">
    <location>
        <begin position="943"/>
        <end position="1009"/>
    </location>
</feature>
<feature type="region of interest" description="Disordered" evidence="2">
    <location>
        <begin position="1274"/>
        <end position="1304"/>
    </location>
</feature>
<feature type="region of interest" description="Disordered" evidence="2">
    <location>
        <begin position="1773"/>
        <end position="1804"/>
    </location>
</feature>
<feature type="region of interest" description="Disordered" evidence="2">
    <location>
        <begin position="1954"/>
        <end position="1973"/>
    </location>
</feature>
<feature type="region of interest" description="Disordered" evidence="2">
    <location>
        <begin position="2008"/>
        <end position="2031"/>
    </location>
</feature>
<feature type="region of interest" description="Disordered" evidence="2">
    <location>
        <begin position="2083"/>
        <end position="2103"/>
    </location>
</feature>
<feature type="region of interest" description="Disordered" evidence="2">
    <location>
        <begin position="2637"/>
        <end position="2680"/>
    </location>
</feature>
<feature type="region of interest" description="Disordered" evidence="2">
    <location>
        <begin position="3730"/>
        <end position="3756"/>
    </location>
</feature>
<feature type="region of interest" description="Disordered" evidence="2">
    <location>
        <begin position="4119"/>
        <end position="4260"/>
    </location>
</feature>
<feature type="region of interest" description="Disordered" evidence="2">
    <location>
        <begin position="4293"/>
        <end position="4428"/>
    </location>
</feature>
<feature type="region of interest" description="Disordered" evidence="2">
    <location>
        <begin position="4729"/>
        <end position="4756"/>
    </location>
</feature>
<feature type="region of interest" description="Disordered" evidence="2">
    <location>
        <begin position="4794"/>
        <end position="4817"/>
    </location>
</feature>
<feature type="region of interest" description="Disordered" evidence="2">
    <location>
        <begin position="4831"/>
        <end position="4859"/>
    </location>
</feature>
<feature type="region of interest" description="Disordered" evidence="2">
    <location>
        <begin position="4928"/>
        <end position="4955"/>
    </location>
</feature>
<feature type="region of interest" description="Disordered" evidence="2">
    <location>
        <begin position="4966"/>
        <end position="4985"/>
    </location>
</feature>
<feature type="region of interest" description="Disordered" evidence="2">
    <location>
        <begin position="5191"/>
        <end position="5212"/>
    </location>
</feature>
<feature type="region of interest" description="Disordered" evidence="2">
    <location>
        <begin position="5467"/>
        <end position="5496"/>
    </location>
</feature>
<feature type="region of interest" description="Disordered" evidence="2">
    <location>
        <begin position="5564"/>
        <end position="5583"/>
    </location>
</feature>
<feature type="region of interest" description="Disordered" evidence="2">
    <location>
        <begin position="5763"/>
        <end position="5792"/>
    </location>
</feature>
<feature type="region of interest" description="Disordered" evidence="2">
    <location>
        <begin position="6859"/>
        <end position="6878"/>
    </location>
</feature>
<feature type="region of interest" description="Disordered" evidence="2">
    <location>
        <begin position="6916"/>
        <end position="6950"/>
    </location>
</feature>
<feature type="compositionally biased region" description="Polar residues" evidence="2">
    <location>
        <begin position="718"/>
        <end position="742"/>
    </location>
</feature>
<feature type="compositionally biased region" description="Polar residues" evidence="2">
    <location>
        <begin position="958"/>
        <end position="970"/>
    </location>
</feature>
<feature type="compositionally biased region" description="Basic and acidic residues" evidence="2">
    <location>
        <begin position="981"/>
        <end position="999"/>
    </location>
</feature>
<feature type="compositionally biased region" description="Polar residues" evidence="2">
    <location>
        <begin position="1274"/>
        <end position="1286"/>
    </location>
</feature>
<feature type="compositionally biased region" description="Polar residues" evidence="2">
    <location>
        <begin position="1295"/>
        <end position="1304"/>
    </location>
</feature>
<feature type="compositionally biased region" description="Basic and acidic residues" evidence="2">
    <location>
        <begin position="1773"/>
        <end position="1784"/>
    </location>
</feature>
<feature type="compositionally biased region" description="Basic and acidic residues" evidence="2">
    <location>
        <begin position="1793"/>
        <end position="1804"/>
    </location>
</feature>
<feature type="compositionally biased region" description="Polar residues" evidence="2">
    <location>
        <begin position="1964"/>
        <end position="1973"/>
    </location>
</feature>
<feature type="compositionally biased region" description="Polar residues" evidence="2">
    <location>
        <begin position="2668"/>
        <end position="2678"/>
    </location>
</feature>
<feature type="compositionally biased region" description="Basic and acidic residues" evidence="2">
    <location>
        <begin position="4121"/>
        <end position="4133"/>
    </location>
</feature>
<feature type="compositionally biased region" description="Basic and acidic residues" evidence="2">
    <location>
        <begin position="4147"/>
        <end position="4176"/>
    </location>
</feature>
<feature type="compositionally biased region" description="Basic and acidic residues" evidence="2">
    <location>
        <begin position="4192"/>
        <end position="4245"/>
    </location>
</feature>
<feature type="compositionally biased region" description="Basic and acidic residues" evidence="2">
    <location>
        <begin position="4329"/>
        <end position="4361"/>
    </location>
</feature>
<feature type="compositionally biased region" description="Basic and acidic residues" evidence="2">
    <location>
        <begin position="4375"/>
        <end position="4401"/>
    </location>
</feature>
<feature type="compositionally biased region" description="Basic and acidic residues" evidence="2">
    <location>
        <begin position="4415"/>
        <end position="4426"/>
    </location>
</feature>
<feature type="compositionally biased region" description="Polar residues" evidence="2">
    <location>
        <begin position="4731"/>
        <end position="4743"/>
    </location>
</feature>
<feature type="compositionally biased region" description="Basic and acidic residues" evidence="2">
    <location>
        <begin position="4746"/>
        <end position="4756"/>
    </location>
</feature>
<feature type="compositionally biased region" description="Basic and acidic residues" evidence="2">
    <location>
        <begin position="4798"/>
        <end position="4817"/>
    </location>
</feature>
<feature type="compositionally biased region" description="Polar residues" evidence="2">
    <location>
        <begin position="5203"/>
        <end position="5212"/>
    </location>
</feature>
<feature type="compositionally biased region" description="Basic and acidic residues" evidence="2">
    <location>
        <begin position="5469"/>
        <end position="5496"/>
    </location>
</feature>
<feature type="compositionally biased region" description="Basic and acidic residues" evidence="2">
    <location>
        <begin position="5779"/>
        <end position="5792"/>
    </location>
</feature>
<feature type="compositionally biased region" description="Basic residues" evidence="2">
    <location>
        <begin position="6860"/>
        <end position="6871"/>
    </location>
</feature>
<feature type="compositionally biased region" description="Basic and acidic residues" evidence="2">
    <location>
        <begin position="6937"/>
        <end position="6950"/>
    </location>
</feature>
<feature type="sequence variant" id="VAR_044210" description="In dbSNP:rs11843669.">
    <original>P</original>
    <variation>S</variation>
    <location>
        <position position="4659"/>
    </location>
</feature>
<feature type="sequence variant" id="VAR_044211" description="In dbSNP:rs17592459.">
    <original>M</original>
    <variation>V</variation>
    <location>
        <position position="4723"/>
    </location>
</feature>
<feature type="sequence variant" id="VAR_044212" description="In dbSNP:rs9518825.">
    <original>G</original>
    <variation>S</variation>
    <location>
        <position position="4893"/>
    </location>
</feature>
<feature type="sequence variant" id="VAR_044213" description="In dbSNP:rs9300758." evidence="3">
    <original>S</original>
    <variation>P</variation>
    <location>
        <position position="4943"/>
    </location>
</feature>
<feature type="sequence variant" id="VAR_044214" description="In dbSNP:rs9300757.">
    <original>L</original>
    <variation>P</variation>
    <location>
        <position position="4976"/>
    </location>
</feature>
<feature type="sequence variant" id="VAR_044215" description="In dbSNP:rs17507841.">
    <original>G</original>
    <variation>A</variation>
    <location>
        <position position="5011"/>
    </location>
</feature>
<feature type="sequence variant" id="VAR_044216" description="In dbSNP:rs7982465.">
    <original>R</original>
    <variation>T</variation>
    <location>
        <position position="5644"/>
    </location>
</feature>
<feature type="sequence variant" id="VAR_044217" description="In dbSNP:rs7983175.">
    <original>N</original>
    <variation>S</variation>
    <location>
        <position position="5750"/>
    </location>
</feature>
<feature type="sequence variant" id="VAR_044218" description="In dbSNP:rs17592438.">
    <original>R</original>
    <variation>Q</variation>
    <location>
        <position position="5838"/>
    </location>
</feature>
<feature type="sequence variant" id="VAR_044219" description="In dbSNP:rs7335290.">
    <original>F</original>
    <variation>L</variation>
    <location>
        <position position="5916"/>
    </location>
</feature>
<feature type="sequence variant" id="VAR_044220" description="In dbSNP:rs6491707." evidence="3">
    <original>L</original>
    <variation>P</variation>
    <location>
        <position position="6011"/>
    </location>
</feature>
<feature type="sequence variant" id="VAR_044221" description="In dbSNP:rs9300756.">
    <original>R</original>
    <variation>C</variation>
    <location>
        <position position="6075"/>
    </location>
</feature>
<feature type="sequence variant" id="VAR_044222" description="In dbSNP:rs17507827.">
    <original>T</original>
    <variation>M</variation>
    <location>
        <position position="6112"/>
    </location>
</feature>
<feature type="sequence variant" id="VAR_044223" description="In dbSNP:rs9514051.">
    <original>E</original>
    <variation>A</variation>
    <location>
        <position position="6508"/>
    </location>
</feature>
<feature type="sequence variant" id="VAR_044224" description="In dbSNP:rs9554897." evidence="3">
    <original>K</original>
    <variation>E</variation>
    <location>
        <position position="6544"/>
    </location>
</feature>
<feature type="sequence conflict" description="In Ref. 2; AK125984." evidence="4" ref="2">
    <original>L</original>
    <variation>P</variation>
    <location>
        <position position="6626"/>
    </location>
</feature>
<feature type="sequence conflict" description="In Ref. 3; CAD38764." evidence="4" ref="3">
    <original>LIRKFPQPTLV</original>
    <variation>RSEAHTRVG</variation>
    <location>
        <begin position="6689"/>
        <end position="6699"/>
    </location>
</feature>
<feature type="sequence conflict" description="In Ref. 2; AK125984." evidence="4" ref="2">
    <original>R</original>
    <variation>S</variation>
    <location>
        <position position="6865"/>
    </location>
</feature>
<feature type="sequence conflict" description="In Ref. 2; AK125984." evidence="4" ref="2">
    <original>K</original>
    <variation>N</variation>
    <location>
        <position position="6908"/>
    </location>
</feature>
<name>CC168_HUMAN</name>
<gene>
    <name evidence="5" type="primary">CCDC168</name>
    <name evidence="5" type="synonym">C13orf40</name>
</gene>
<organism>
    <name type="scientific">Homo sapiens</name>
    <name type="common">Human</name>
    <dbReference type="NCBI Taxonomy" id="9606"/>
    <lineage>
        <taxon>Eukaryota</taxon>
        <taxon>Metazoa</taxon>
        <taxon>Chordata</taxon>
        <taxon>Craniata</taxon>
        <taxon>Vertebrata</taxon>
        <taxon>Euteleostomi</taxon>
        <taxon>Mammalia</taxon>
        <taxon>Eutheria</taxon>
        <taxon>Euarchontoglires</taxon>
        <taxon>Primates</taxon>
        <taxon>Haplorrhini</taxon>
        <taxon>Catarrhini</taxon>
        <taxon>Hominidae</taxon>
        <taxon>Homo</taxon>
    </lineage>
</organism>
<accession>Q8NDH2</accession>
<accession>Q8N800</accession>
<reference key="1">
    <citation type="journal article" date="2004" name="Nature">
        <title>The DNA sequence and analysis of human chromosome 13.</title>
        <authorList>
            <person name="Dunham A."/>
            <person name="Matthews L.H."/>
            <person name="Burton J."/>
            <person name="Ashurst J.L."/>
            <person name="Howe K.L."/>
            <person name="Ashcroft K.J."/>
            <person name="Beare D.M."/>
            <person name="Burford D.C."/>
            <person name="Hunt S.E."/>
            <person name="Griffiths-Jones S."/>
            <person name="Jones M.C."/>
            <person name="Keenan S.J."/>
            <person name="Oliver K."/>
            <person name="Scott C.E."/>
            <person name="Ainscough R."/>
            <person name="Almeida J.P."/>
            <person name="Ambrose K.D."/>
            <person name="Andrews D.T."/>
            <person name="Ashwell R.I.S."/>
            <person name="Babbage A.K."/>
            <person name="Bagguley C.L."/>
            <person name="Bailey J."/>
            <person name="Bannerjee R."/>
            <person name="Barlow K.F."/>
            <person name="Bates K."/>
            <person name="Beasley H."/>
            <person name="Bird C.P."/>
            <person name="Bray-Allen S."/>
            <person name="Brown A.J."/>
            <person name="Brown J.Y."/>
            <person name="Burrill W."/>
            <person name="Carder C."/>
            <person name="Carter N.P."/>
            <person name="Chapman J.C."/>
            <person name="Clamp M.E."/>
            <person name="Clark S.Y."/>
            <person name="Clarke G."/>
            <person name="Clee C.M."/>
            <person name="Clegg S.C."/>
            <person name="Cobley V."/>
            <person name="Collins J.E."/>
            <person name="Corby N."/>
            <person name="Coville G.J."/>
            <person name="Deloukas P."/>
            <person name="Dhami P."/>
            <person name="Dunham I."/>
            <person name="Dunn M."/>
            <person name="Earthrowl M.E."/>
            <person name="Ellington A.G."/>
            <person name="Faulkner L."/>
            <person name="Frankish A.G."/>
            <person name="Frankland J."/>
            <person name="French L."/>
            <person name="Garner P."/>
            <person name="Garnett J."/>
            <person name="Gilbert J.G.R."/>
            <person name="Gilson C.J."/>
            <person name="Ghori J."/>
            <person name="Grafham D.V."/>
            <person name="Gribble S.M."/>
            <person name="Griffiths C."/>
            <person name="Hall R.E."/>
            <person name="Hammond S."/>
            <person name="Harley J.L."/>
            <person name="Hart E.A."/>
            <person name="Heath P.D."/>
            <person name="Howden P.J."/>
            <person name="Huckle E.J."/>
            <person name="Hunt P.J."/>
            <person name="Hunt A.R."/>
            <person name="Johnson C."/>
            <person name="Johnson D."/>
            <person name="Kay M."/>
            <person name="Kimberley A.M."/>
            <person name="King A."/>
            <person name="Laird G.K."/>
            <person name="Langford C.J."/>
            <person name="Lawlor S."/>
            <person name="Leongamornlert D.A."/>
            <person name="Lloyd D.M."/>
            <person name="Lloyd C."/>
            <person name="Loveland J.E."/>
            <person name="Lovell J."/>
            <person name="Martin S."/>
            <person name="Mashreghi-Mohammadi M."/>
            <person name="McLaren S.J."/>
            <person name="McMurray A."/>
            <person name="Milne S."/>
            <person name="Moore M.J.F."/>
            <person name="Nickerson T."/>
            <person name="Palmer S.A."/>
            <person name="Pearce A.V."/>
            <person name="Peck A.I."/>
            <person name="Pelan S."/>
            <person name="Phillimore B."/>
            <person name="Porter K.M."/>
            <person name="Rice C.M."/>
            <person name="Searle S."/>
            <person name="Sehra H.K."/>
            <person name="Shownkeen R."/>
            <person name="Skuce C.D."/>
            <person name="Smith M."/>
            <person name="Steward C.A."/>
            <person name="Sycamore N."/>
            <person name="Tester J."/>
            <person name="Thomas D.W."/>
            <person name="Tracey A."/>
            <person name="Tromans A."/>
            <person name="Tubby B."/>
            <person name="Wall M."/>
            <person name="Wallis J.M."/>
            <person name="West A.P."/>
            <person name="Whitehead S.L."/>
            <person name="Willey D.L."/>
            <person name="Wilming L."/>
            <person name="Wray P.W."/>
            <person name="Wright M.W."/>
            <person name="Young L."/>
            <person name="Coulson A."/>
            <person name="Durbin R.M."/>
            <person name="Hubbard T."/>
            <person name="Sulston J.E."/>
            <person name="Beck S."/>
            <person name="Bentley D.R."/>
            <person name="Rogers J."/>
            <person name="Ross M.T."/>
        </authorList>
    </citation>
    <scope>NUCLEOTIDE SEQUENCE [LARGE SCALE GENOMIC DNA]</scope>
</reference>
<reference key="2">
    <citation type="journal article" date="2004" name="Nat. Genet.">
        <title>Complete sequencing and characterization of 21,243 full-length human cDNAs.</title>
        <authorList>
            <person name="Ota T."/>
            <person name="Suzuki Y."/>
            <person name="Nishikawa T."/>
            <person name="Otsuki T."/>
            <person name="Sugiyama T."/>
            <person name="Irie R."/>
            <person name="Wakamatsu A."/>
            <person name="Hayashi K."/>
            <person name="Sato H."/>
            <person name="Nagai K."/>
            <person name="Kimura K."/>
            <person name="Makita H."/>
            <person name="Sekine M."/>
            <person name="Obayashi M."/>
            <person name="Nishi T."/>
            <person name="Shibahara T."/>
            <person name="Tanaka T."/>
            <person name="Ishii S."/>
            <person name="Yamamoto J."/>
            <person name="Saito K."/>
            <person name="Kawai Y."/>
            <person name="Isono Y."/>
            <person name="Nakamura Y."/>
            <person name="Nagahari K."/>
            <person name="Murakami K."/>
            <person name="Yasuda T."/>
            <person name="Iwayanagi T."/>
            <person name="Wagatsuma M."/>
            <person name="Shiratori A."/>
            <person name="Sudo H."/>
            <person name="Hosoiri T."/>
            <person name="Kaku Y."/>
            <person name="Kodaira H."/>
            <person name="Kondo H."/>
            <person name="Sugawara M."/>
            <person name="Takahashi M."/>
            <person name="Kanda K."/>
            <person name="Yokoi T."/>
            <person name="Furuya T."/>
            <person name="Kikkawa E."/>
            <person name="Omura Y."/>
            <person name="Abe K."/>
            <person name="Kamihara K."/>
            <person name="Katsuta N."/>
            <person name="Sato K."/>
            <person name="Tanikawa M."/>
            <person name="Yamazaki M."/>
            <person name="Ninomiya K."/>
            <person name="Ishibashi T."/>
            <person name="Yamashita H."/>
            <person name="Murakawa K."/>
            <person name="Fujimori K."/>
            <person name="Tanai H."/>
            <person name="Kimata M."/>
            <person name="Watanabe M."/>
            <person name="Hiraoka S."/>
            <person name="Chiba Y."/>
            <person name="Ishida S."/>
            <person name="Ono Y."/>
            <person name="Takiguchi S."/>
            <person name="Watanabe S."/>
            <person name="Yosida M."/>
            <person name="Hotuta T."/>
            <person name="Kusano J."/>
            <person name="Kanehori K."/>
            <person name="Takahashi-Fujii A."/>
            <person name="Hara H."/>
            <person name="Tanase T.-O."/>
            <person name="Nomura Y."/>
            <person name="Togiya S."/>
            <person name="Komai F."/>
            <person name="Hara R."/>
            <person name="Takeuchi K."/>
            <person name="Arita M."/>
            <person name="Imose N."/>
            <person name="Musashino K."/>
            <person name="Yuuki H."/>
            <person name="Oshima A."/>
            <person name="Sasaki N."/>
            <person name="Aotsuka S."/>
            <person name="Yoshikawa Y."/>
            <person name="Matsunawa H."/>
            <person name="Ichihara T."/>
            <person name="Shiohata N."/>
            <person name="Sano S."/>
            <person name="Moriya S."/>
            <person name="Momiyama H."/>
            <person name="Satoh N."/>
            <person name="Takami S."/>
            <person name="Terashima Y."/>
            <person name="Suzuki O."/>
            <person name="Nakagawa S."/>
            <person name="Senoh A."/>
            <person name="Mizoguchi H."/>
            <person name="Goto Y."/>
            <person name="Shimizu F."/>
            <person name="Wakebe H."/>
            <person name="Hishigaki H."/>
            <person name="Watanabe T."/>
            <person name="Sugiyama A."/>
            <person name="Takemoto M."/>
            <person name="Kawakami B."/>
            <person name="Yamazaki M."/>
            <person name="Watanabe K."/>
            <person name="Kumagai A."/>
            <person name="Itakura S."/>
            <person name="Fukuzumi Y."/>
            <person name="Fujimori Y."/>
            <person name="Komiyama M."/>
            <person name="Tashiro H."/>
            <person name="Tanigami A."/>
            <person name="Fujiwara T."/>
            <person name="Ono T."/>
            <person name="Yamada K."/>
            <person name="Fujii Y."/>
            <person name="Ozaki K."/>
            <person name="Hirao M."/>
            <person name="Ohmori Y."/>
            <person name="Kawabata A."/>
            <person name="Hikiji T."/>
            <person name="Kobatake N."/>
            <person name="Inagaki H."/>
            <person name="Ikema Y."/>
            <person name="Okamoto S."/>
            <person name="Okitani R."/>
            <person name="Kawakami T."/>
            <person name="Noguchi S."/>
            <person name="Itoh T."/>
            <person name="Shigeta K."/>
            <person name="Senba T."/>
            <person name="Matsumura K."/>
            <person name="Nakajima Y."/>
            <person name="Mizuno T."/>
            <person name="Morinaga M."/>
            <person name="Sasaki M."/>
            <person name="Togashi T."/>
            <person name="Oyama M."/>
            <person name="Hata H."/>
            <person name="Watanabe M."/>
            <person name="Komatsu T."/>
            <person name="Mizushima-Sugano J."/>
            <person name="Satoh T."/>
            <person name="Shirai Y."/>
            <person name="Takahashi Y."/>
            <person name="Nakagawa K."/>
            <person name="Okumura K."/>
            <person name="Nagase T."/>
            <person name="Nomura N."/>
            <person name="Kikuchi H."/>
            <person name="Masuho Y."/>
            <person name="Yamashita R."/>
            <person name="Nakai K."/>
            <person name="Yada T."/>
            <person name="Nakamura Y."/>
            <person name="Ohara O."/>
            <person name="Isogai T."/>
            <person name="Sugano S."/>
        </authorList>
    </citation>
    <scope>NUCLEOTIDE SEQUENCE [LARGE SCALE MRNA] OF 4630-5357 AND 6000-7081</scope>
    <scope>VARIANTS PRO-4943; PRO-6011 AND GLU-6544</scope>
    <source>
        <tissue>Testis</tissue>
    </source>
</reference>
<reference key="3">
    <citation type="journal article" date="2007" name="BMC Genomics">
        <title>The full-ORF clone resource of the German cDNA consortium.</title>
        <authorList>
            <person name="Bechtel S."/>
            <person name="Rosenfelder H."/>
            <person name="Duda A."/>
            <person name="Schmidt C.P."/>
            <person name="Ernst U."/>
            <person name="Wellenreuther R."/>
            <person name="Mehrle A."/>
            <person name="Schuster C."/>
            <person name="Bahr A."/>
            <person name="Bloecker H."/>
            <person name="Heubner D."/>
            <person name="Hoerlein A."/>
            <person name="Michel G."/>
            <person name="Wedler H."/>
            <person name="Koehrer K."/>
            <person name="Ottenwaelder B."/>
            <person name="Poustka A."/>
            <person name="Wiemann S."/>
            <person name="Schupp I."/>
        </authorList>
    </citation>
    <scope>NUCLEOTIDE SEQUENCE [LARGE SCALE MRNA] OF 6640-7081</scope>
    <source>
        <tissue>Testis</tissue>
    </source>
</reference>
<proteinExistence type="evidence at protein level"/>
<comment type="subcellular location">
    <subcellularLocation>
        <location evidence="1">Membrane</location>
        <topology evidence="1">Single-pass membrane protein</topology>
    </subcellularLocation>
</comment>